<feature type="chain" id="PRO_0000223459" description="Urease accessory protein UreE">
    <location>
        <begin position="1"/>
        <end position="228"/>
    </location>
</feature>
<feature type="region of interest" description="Disordered" evidence="2">
    <location>
        <begin position="188"/>
        <end position="228"/>
    </location>
</feature>
<feature type="compositionally biased region" description="Basic and acidic residues" evidence="2">
    <location>
        <begin position="204"/>
        <end position="228"/>
    </location>
</feature>
<name>UREE_YERKR</name>
<accession>Q6UR50</accession>
<proteinExistence type="inferred from homology"/>
<organism>
    <name type="scientific">Yersinia kristensenii</name>
    <dbReference type="NCBI Taxonomy" id="28152"/>
    <lineage>
        <taxon>Bacteria</taxon>
        <taxon>Pseudomonadati</taxon>
        <taxon>Pseudomonadota</taxon>
        <taxon>Gammaproteobacteria</taxon>
        <taxon>Enterobacterales</taxon>
        <taxon>Yersiniaceae</taxon>
        <taxon>Yersinia</taxon>
    </lineage>
</organism>
<reference key="1">
    <citation type="submission" date="2003-08" db="EMBL/GenBank/DDBJ databases">
        <title>Yersinia kristensenii urease gene locus (ureABCEFGD), urea transporter gene (yut) and nickel transporter gene (ureH).</title>
        <authorList>
            <person name="Sebbane F."/>
            <person name="Lemaitre N."/>
            <person name="Simonet M."/>
        </authorList>
    </citation>
    <scope>NUCLEOTIDE SEQUENCE [GENOMIC DNA]</scope>
</reference>
<comment type="function">
    <text evidence="1">Involved in urease metallocenter assembly. Binds nickel. Probably functions as a nickel donor during metallocenter assembly.</text>
</comment>
<comment type="subcellular location">
    <subcellularLocation>
        <location evidence="1">Cytoplasm</location>
    </subcellularLocation>
</comment>
<comment type="similarity">
    <text evidence="1">Belongs to the UreE family.</text>
</comment>
<sequence length="228" mass="25628">MILIEHILGNVKKDPIWQEKLKDATFDLLVLDQREAQKSRCRKLSTQGLDLGISLDRHVVLADGDVLAWDEKNRVAVVVQINLRDVMVIDLSELKSRSPDELIKTCFELGHALGNQHWKAVTKHNEVYVPLTVATTMMDSVMRTHGFQHLPFRFVKGAEILPLLSNSEARLLFGGAEDTDTHVHVASPLDEPHGSGLHIHAIHSHGDGHSHDHDHSHSHGDHDHDHKH</sequence>
<evidence type="ECO:0000255" key="1">
    <source>
        <dbReference type="HAMAP-Rule" id="MF_00822"/>
    </source>
</evidence>
<evidence type="ECO:0000256" key="2">
    <source>
        <dbReference type="SAM" id="MobiDB-lite"/>
    </source>
</evidence>
<protein>
    <recommendedName>
        <fullName evidence="1">Urease accessory protein UreE</fullName>
    </recommendedName>
</protein>
<gene>
    <name evidence="1" type="primary">ureE</name>
</gene>
<dbReference type="EMBL" id="AY363684">
    <property type="protein sequence ID" value="AAR15120.1"/>
    <property type="molecule type" value="Genomic_DNA"/>
</dbReference>
<dbReference type="SMR" id="Q6UR50"/>
<dbReference type="STRING" id="28152.CH54_1554"/>
<dbReference type="KEGG" id="ykr:CH54_1554"/>
<dbReference type="eggNOG" id="COG2371">
    <property type="taxonomic scope" value="Bacteria"/>
</dbReference>
<dbReference type="GO" id="GO:0005737">
    <property type="term" value="C:cytoplasm"/>
    <property type="evidence" value="ECO:0007669"/>
    <property type="project" value="UniProtKB-SubCell"/>
</dbReference>
<dbReference type="GO" id="GO:0016151">
    <property type="term" value="F:nickel cation binding"/>
    <property type="evidence" value="ECO:0007669"/>
    <property type="project" value="UniProtKB-UniRule"/>
</dbReference>
<dbReference type="GO" id="GO:0051082">
    <property type="term" value="F:unfolded protein binding"/>
    <property type="evidence" value="ECO:0007669"/>
    <property type="project" value="UniProtKB-UniRule"/>
</dbReference>
<dbReference type="GO" id="GO:0006457">
    <property type="term" value="P:protein folding"/>
    <property type="evidence" value="ECO:0007669"/>
    <property type="project" value="InterPro"/>
</dbReference>
<dbReference type="CDD" id="cd00571">
    <property type="entry name" value="UreE"/>
    <property type="match status" value="1"/>
</dbReference>
<dbReference type="Gene3D" id="2.60.260.20">
    <property type="entry name" value="Urease metallochaperone UreE, N-terminal domain"/>
    <property type="match status" value="1"/>
</dbReference>
<dbReference type="HAMAP" id="MF_00822">
    <property type="entry name" value="UreE"/>
    <property type="match status" value="1"/>
</dbReference>
<dbReference type="InterPro" id="IPR012406">
    <property type="entry name" value="UreE"/>
</dbReference>
<dbReference type="InterPro" id="IPR004029">
    <property type="entry name" value="UreE_N"/>
</dbReference>
<dbReference type="InterPro" id="IPR036118">
    <property type="entry name" value="UreE_N_sf"/>
</dbReference>
<dbReference type="NCBIfam" id="NF009761">
    <property type="entry name" value="PRK13262.1"/>
    <property type="match status" value="1"/>
</dbReference>
<dbReference type="Pfam" id="PF02814">
    <property type="entry name" value="UreE_N"/>
    <property type="match status" value="1"/>
</dbReference>
<dbReference type="PIRSF" id="PIRSF036402">
    <property type="entry name" value="Ureas_acces_UreE"/>
    <property type="match status" value="1"/>
</dbReference>
<dbReference type="SMART" id="SM00988">
    <property type="entry name" value="UreE_N"/>
    <property type="match status" value="1"/>
</dbReference>
<dbReference type="SUPFAM" id="SSF69287">
    <property type="entry name" value="Urease metallochaperone UreE, N-terminal domain"/>
    <property type="match status" value="1"/>
</dbReference>
<keyword id="KW-0143">Chaperone</keyword>
<keyword id="KW-0963">Cytoplasm</keyword>
<keyword id="KW-0533">Nickel</keyword>
<keyword id="KW-0996">Nickel insertion</keyword>